<name>RHG29_RAT</name>
<evidence type="ECO:0000250" key="1"/>
<evidence type="ECO:0000250" key="2">
    <source>
        <dbReference type="UniProtKB" id="Q52LW3"/>
    </source>
</evidence>
<evidence type="ECO:0000250" key="3">
    <source>
        <dbReference type="UniProtKB" id="Q8CGF1"/>
    </source>
</evidence>
<evidence type="ECO:0000255" key="4"/>
<evidence type="ECO:0000255" key="5">
    <source>
        <dbReference type="PROSITE-ProRule" id="PRU00172"/>
    </source>
</evidence>
<evidence type="ECO:0000255" key="6">
    <source>
        <dbReference type="PROSITE-ProRule" id="PRU00226"/>
    </source>
</evidence>
<evidence type="ECO:0000255" key="7">
    <source>
        <dbReference type="PROSITE-ProRule" id="PRU01077"/>
    </source>
</evidence>
<evidence type="ECO:0000256" key="8">
    <source>
        <dbReference type="SAM" id="MobiDB-lite"/>
    </source>
</evidence>
<evidence type="ECO:0000303" key="9">
    <source>
    </source>
</evidence>
<evidence type="ECO:0007744" key="10">
    <source>
    </source>
</evidence>
<sequence length="1266" mass="141943">MIAHKQKKAKKKRVWASGQLSAAITTSEMGLKSVSSNSIFDPEYIKELVNDIRKFSHVLLYLKEAILSDCFKEVIHIRLDELLHMSKHQNLNSVDLQNAAETLASKVKAVNFTEVNDENKNDLFREVFSSIETLAFTFGNILTNFLMGDVGNDSILRLPISRESKSFENISMDSVDLPHEKGNFSPIELDNLLLKNSDSIELALSYAKTWSKYTKNIVSWVEKKLNLELESTRNIVKLAEATRSSIGIQEFMPLQSLFTNALLNDIHSSHLLQQTIAALQANKFVQPLLGRKNEMEKQRKEIKELWKQQQNKLLETETALKKAKLLCMQRQDEYEKAKSSMFRAEEEQLSSSVGLGKNLNKLLEKRRRLEEEALQKVEEANEHYKVCVTNVEERRNDLENTKREILTQLRTLVFQCDLTLKAVTVNLFHMQQLQAASLANSLQSLCDSAKLYDPGQEYSEFVKATSSSELEEKVDGNVNKQIASSPQTSGYEPADSLEDVARLPDSCHKLEEDRCSNSADMTGPSFIRSWKFGMFSDSESTGGSSESRSLDSESISPGDFHRKLPRTPSSGTMSSADDLDEREPPSPSEAGPNSLGTFKKTLMSKAALTHKFRKLRSPTKCRDCEGIVMFPGVECEECLLVCHRKCLENLVIVCGHQKLQGKMHIFGAEFIQVAKKEPDGIPFVLKICASEIESRALCLQGIYRVCGNKIKTEKLCQALENGMHLVDISEFSSHDICDVLKLYLRQLPEPFILFRLYKEFIDLAKEIQHVNEEQEAKKDSPEDKKHPHVSIEINRILLRSKDLLRQLPASNFNSLHYLIVHLKRVVDHAEENKMNSKNLGVIFGPTLIRPRPTTAPVTISSLAEYSSQARVVEFLITYAQKIFDGSLQPQAGVIANTGAIAPQVDHGCHPKPLLSPDERDSDHSLKQLFFSSKEDIRTMDCESKTFELTTSFEESERKQNALGKCDAPILDNKVHLLFDQELESASHKTEDTCKSPKLLLLRSDRVANSVQRPTPRTRLRPVSLPVDRLLLLAGSPTERSSRNTGNTDSDKFGKNAAFEGLHRKDNSNTTCSKVNGFDQQNVQKSWDKQNERNSFTAKTTVIIPSAYAEKGLAVSTGNNRGHSSGAAQPSKAHADPARSARDTSEHSSSDSCPVAAVRAPRTLQPQHWTTFYKPPNPTFNVRGTEEKTAFPSAAVPPVLVHAPQSHVAKSDPDLEATLACPVQTSGQPKESSEEPGLPEGTPTCQRPRLKRMQQFEDLEDEIPQFV</sequence>
<comment type="function">
    <text evidence="1">GTPase activator for the Rho-type GTPases by converting them to an inactive GDP-bound state. Has strong activity toward RHOA, and weaker activity toward RAC1 and CDC42. May act as a specific effector of RAP2A to regulate Rho (By similarity). In concert with RASIP1, suppresses RhoA signaling and dampens ROCK and MYH9 activities in endothelial cells and plays an essential role in blood vessel tubulogenesis (By similarity).</text>
</comment>
<comment type="subunit">
    <text evidence="1">Interacts with PTPN13/PTPL1. Interacts with RAP2A via its coiled coil domain (By similarity). Interacts with RASIP1 (By similarity).</text>
</comment>
<comment type="alternative products">
    <event type="alternative splicing"/>
    <isoform>
        <id>Q5PQJ5-1</id>
        <name>1</name>
        <sequence type="displayed"/>
    </isoform>
    <isoform>
        <id>Q5PQJ5-2</id>
        <name>2</name>
        <sequence type="described" ref="VSP_031061"/>
    </isoform>
</comment>
<dbReference type="EMBL" id="AABR03012575">
    <property type="status" value="NOT_ANNOTATED_CDS"/>
    <property type="molecule type" value="Genomic_DNA"/>
</dbReference>
<dbReference type="EMBL" id="BC087167">
    <property type="protein sequence ID" value="AAH87167.1"/>
    <property type="molecule type" value="mRNA"/>
</dbReference>
<dbReference type="RefSeq" id="NP_001009405.1">
    <molecule id="Q5PQJ5-2"/>
    <property type="nucleotide sequence ID" value="NM_001009405.1"/>
</dbReference>
<dbReference type="SMR" id="Q5PQJ5"/>
<dbReference type="BioGRID" id="259768">
    <property type="interactions" value="1"/>
</dbReference>
<dbReference type="FunCoup" id="Q5PQJ5">
    <property type="interactions" value="616"/>
</dbReference>
<dbReference type="STRING" id="10116.ENSRNOP00000017076"/>
<dbReference type="iPTMnet" id="Q5PQJ5"/>
<dbReference type="PhosphoSitePlus" id="Q5PQJ5"/>
<dbReference type="PaxDb" id="10116-ENSRNOP00000017076"/>
<dbReference type="Ensembl" id="ENSRNOT00000066486.4">
    <molecule id="Q5PQJ5-2"/>
    <property type="protein sequence ID" value="ENSRNOP00000062636.1"/>
    <property type="gene ID" value="ENSRNOG00000012563.8"/>
</dbReference>
<dbReference type="GeneID" id="310833"/>
<dbReference type="KEGG" id="rno:310833"/>
<dbReference type="UCSC" id="RGD:1306185">
    <molecule id="Q5PQJ5-1"/>
    <property type="organism name" value="rat"/>
</dbReference>
<dbReference type="AGR" id="RGD:1306185"/>
<dbReference type="CTD" id="9411"/>
<dbReference type="RGD" id="1306185">
    <property type="gene designation" value="Arhgap29"/>
</dbReference>
<dbReference type="VEuPathDB" id="HostDB:ENSRNOG00000012563"/>
<dbReference type="eggNOG" id="KOG1453">
    <property type="taxonomic scope" value="Eukaryota"/>
</dbReference>
<dbReference type="GeneTree" id="ENSGT00950000183110"/>
<dbReference type="InParanoid" id="Q5PQJ5"/>
<dbReference type="PhylomeDB" id="Q5PQJ5"/>
<dbReference type="Reactome" id="R-RNO-8980692">
    <property type="pathway name" value="RHOA GTPase cycle"/>
</dbReference>
<dbReference type="Reactome" id="R-RNO-9013148">
    <property type="pathway name" value="CDC42 GTPase cycle"/>
</dbReference>
<dbReference type="Reactome" id="R-RNO-9013149">
    <property type="pathway name" value="RAC1 GTPase cycle"/>
</dbReference>
<dbReference type="PRO" id="PR:Q5PQJ5"/>
<dbReference type="Proteomes" id="UP000002494">
    <property type="component" value="Chromosome 2"/>
</dbReference>
<dbReference type="Bgee" id="ENSRNOG00000012563">
    <property type="expression patterns" value="Expressed in lung and 20 other cell types or tissues"/>
</dbReference>
<dbReference type="ExpressionAtlas" id="Q5PQJ5">
    <property type="expression patterns" value="baseline and differential"/>
</dbReference>
<dbReference type="GO" id="GO:0005737">
    <property type="term" value="C:cytoplasm"/>
    <property type="evidence" value="ECO:0000266"/>
    <property type="project" value="RGD"/>
</dbReference>
<dbReference type="GO" id="GO:0032991">
    <property type="term" value="C:protein-containing complex"/>
    <property type="evidence" value="ECO:0000266"/>
    <property type="project" value="RGD"/>
</dbReference>
<dbReference type="GO" id="GO:0005096">
    <property type="term" value="F:GTPase activator activity"/>
    <property type="evidence" value="ECO:0000318"/>
    <property type="project" value="GO_Central"/>
</dbReference>
<dbReference type="GO" id="GO:0030165">
    <property type="term" value="F:PDZ domain binding"/>
    <property type="evidence" value="ECO:0000266"/>
    <property type="project" value="RGD"/>
</dbReference>
<dbReference type="GO" id="GO:0008270">
    <property type="term" value="F:zinc ion binding"/>
    <property type="evidence" value="ECO:0007669"/>
    <property type="project" value="UniProtKB-KW"/>
</dbReference>
<dbReference type="GO" id="GO:0051058">
    <property type="term" value="P:negative regulation of small GTPase mediated signal transduction"/>
    <property type="evidence" value="ECO:0000318"/>
    <property type="project" value="GO_Central"/>
</dbReference>
<dbReference type="GO" id="GO:0007165">
    <property type="term" value="P:signal transduction"/>
    <property type="evidence" value="ECO:0007669"/>
    <property type="project" value="InterPro"/>
</dbReference>
<dbReference type="CDD" id="cd20816">
    <property type="entry name" value="C1_GMIP-like"/>
    <property type="match status" value="1"/>
</dbReference>
<dbReference type="FunFam" id="1.10.555.10:FF:000016">
    <property type="entry name" value="Rho GTPase activating protein 29"/>
    <property type="match status" value="1"/>
</dbReference>
<dbReference type="FunFam" id="1.20.1270.60:FF:000038">
    <property type="entry name" value="Rho GTPase activating protein 29"/>
    <property type="match status" value="1"/>
</dbReference>
<dbReference type="Gene3D" id="3.30.60.20">
    <property type="match status" value="1"/>
</dbReference>
<dbReference type="Gene3D" id="1.20.1270.60">
    <property type="entry name" value="Arfaptin homology (AH) domain/BAR domain"/>
    <property type="match status" value="1"/>
</dbReference>
<dbReference type="Gene3D" id="1.10.555.10">
    <property type="entry name" value="Rho GTPase activation protein"/>
    <property type="match status" value="1"/>
</dbReference>
<dbReference type="InterPro" id="IPR027267">
    <property type="entry name" value="AH/BAR_dom_sf"/>
</dbReference>
<dbReference type="InterPro" id="IPR046349">
    <property type="entry name" value="C1-like_sf"/>
</dbReference>
<dbReference type="InterPro" id="IPR031160">
    <property type="entry name" value="F_BAR"/>
</dbReference>
<dbReference type="InterPro" id="IPR054713">
    <property type="entry name" value="GMIP/FCHO2-like_FCH"/>
</dbReference>
<dbReference type="InterPro" id="IPR002219">
    <property type="entry name" value="PE/DAG-bd"/>
</dbReference>
<dbReference type="InterPro" id="IPR057028">
    <property type="entry name" value="RHG29_45_N"/>
</dbReference>
<dbReference type="InterPro" id="IPR008936">
    <property type="entry name" value="Rho_GTPase_activation_prot"/>
</dbReference>
<dbReference type="InterPro" id="IPR051025">
    <property type="entry name" value="RhoGAP"/>
</dbReference>
<dbReference type="InterPro" id="IPR000198">
    <property type="entry name" value="RhoGAP_dom"/>
</dbReference>
<dbReference type="PANTHER" id="PTHR15228:SF7">
    <property type="entry name" value="RHO GTPASE-ACTIVATING PROTEIN 29"/>
    <property type="match status" value="1"/>
</dbReference>
<dbReference type="PANTHER" id="PTHR15228">
    <property type="entry name" value="SPERMATHECAL PHYSIOLOGY VARIANT"/>
    <property type="match status" value="1"/>
</dbReference>
<dbReference type="Pfam" id="PF00130">
    <property type="entry name" value="C1_1"/>
    <property type="match status" value="1"/>
</dbReference>
<dbReference type="Pfam" id="PF22699">
    <property type="entry name" value="GMIP-like_FCH"/>
    <property type="match status" value="1"/>
</dbReference>
<dbReference type="Pfam" id="PF24235">
    <property type="entry name" value="RHG29_45_N"/>
    <property type="match status" value="1"/>
</dbReference>
<dbReference type="Pfam" id="PF00620">
    <property type="entry name" value="RhoGAP"/>
    <property type="match status" value="1"/>
</dbReference>
<dbReference type="SMART" id="SM00109">
    <property type="entry name" value="C1"/>
    <property type="match status" value="1"/>
</dbReference>
<dbReference type="SMART" id="SM00324">
    <property type="entry name" value="RhoGAP"/>
    <property type="match status" value="1"/>
</dbReference>
<dbReference type="SUPFAM" id="SSF103657">
    <property type="entry name" value="BAR/IMD domain-like"/>
    <property type="match status" value="1"/>
</dbReference>
<dbReference type="SUPFAM" id="SSF57889">
    <property type="entry name" value="Cysteine-rich domain"/>
    <property type="match status" value="1"/>
</dbReference>
<dbReference type="SUPFAM" id="SSF48350">
    <property type="entry name" value="GTPase activation domain, GAP"/>
    <property type="match status" value="1"/>
</dbReference>
<dbReference type="PROSITE" id="PS51741">
    <property type="entry name" value="F_BAR"/>
    <property type="match status" value="1"/>
</dbReference>
<dbReference type="PROSITE" id="PS50238">
    <property type="entry name" value="RHOGAP"/>
    <property type="match status" value="1"/>
</dbReference>
<dbReference type="PROSITE" id="PS00479">
    <property type="entry name" value="ZF_DAG_PE_1"/>
    <property type="match status" value="1"/>
</dbReference>
<dbReference type="PROSITE" id="PS50081">
    <property type="entry name" value="ZF_DAG_PE_2"/>
    <property type="match status" value="1"/>
</dbReference>
<reference key="1">
    <citation type="journal article" date="2004" name="Nature">
        <title>Genome sequence of the Brown Norway rat yields insights into mammalian evolution.</title>
        <authorList>
            <person name="Gibbs R.A."/>
            <person name="Weinstock G.M."/>
            <person name="Metzker M.L."/>
            <person name="Muzny D.M."/>
            <person name="Sodergren E.J."/>
            <person name="Scherer S."/>
            <person name="Scott G."/>
            <person name="Steffen D."/>
            <person name="Worley K.C."/>
            <person name="Burch P.E."/>
            <person name="Okwuonu G."/>
            <person name="Hines S."/>
            <person name="Lewis L."/>
            <person name="Deramo C."/>
            <person name="Delgado O."/>
            <person name="Dugan-Rocha S."/>
            <person name="Miner G."/>
            <person name="Morgan M."/>
            <person name="Hawes A."/>
            <person name="Gill R."/>
            <person name="Holt R.A."/>
            <person name="Adams M.D."/>
            <person name="Amanatides P.G."/>
            <person name="Baden-Tillson H."/>
            <person name="Barnstead M."/>
            <person name="Chin S."/>
            <person name="Evans C.A."/>
            <person name="Ferriera S."/>
            <person name="Fosler C."/>
            <person name="Glodek A."/>
            <person name="Gu Z."/>
            <person name="Jennings D."/>
            <person name="Kraft C.L."/>
            <person name="Nguyen T."/>
            <person name="Pfannkoch C.M."/>
            <person name="Sitter C."/>
            <person name="Sutton G.G."/>
            <person name="Venter J.C."/>
            <person name="Woodage T."/>
            <person name="Smith D."/>
            <person name="Lee H.-M."/>
            <person name="Gustafson E."/>
            <person name="Cahill P."/>
            <person name="Kana A."/>
            <person name="Doucette-Stamm L."/>
            <person name="Weinstock K."/>
            <person name="Fechtel K."/>
            <person name="Weiss R.B."/>
            <person name="Dunn D.M."/>
            <person name="Green E.D."/>
            <person name="Blakesley R.W."/>
            <person name="Bouffard G.G."/>
            <person name="De Jong P.J."/>
            <person name="Osoegawa K."/>
            <person name="Zhu B."/>
            <person name="Marra M."/>
            <person name="Schein J."/>
            <person name="Bosdet I."/>
            <person name="Fjell C."/>
            <person name="Jones S."/>
            <person name="Krzywinski M."/>
            <person name="Mathewson C."/>
            <person name="Siddiqui A."/>
            <person name="Wye N."/>
            <person name="McPherson J."/>
            <person name="Zhao S."/>
            <person name="Fraser C.M."/>
            <person name="Shetty J."/>
            <person name="Shatsman S."/>
            <person name="Geer K."/>
            <person name="Chen Y."/>
            <person name="Abramzon S."/>
            <person name="Nierman W.C."/>
            <person name="Havlak P.H."/>
            <person name="Chen R."/>
            <person name="Durbin K.J."/>
            <person name="Egan A."/>
            <person name="Ren Y."/>
            <person name="Song X.-Z."/>
            <person name="Li B."/>
            <person name="Liu Y."/>
            <person name="Qin X."/>
            <person name="Cawley S."/>
            <person name="Cooney A.J."/>
            <person name="D'Souza L.M."/>
            <person name="Martin K."/>
            <person name="Wu J.Q."/>
            <person name="Gonzalez-Garay M.L."/>
            <person name="Jackson A.R."/>
            <person name="Kalafus K.J."/>
            <person name="McLeod M.P."/>
            <person name="Milosavljevic A."/>
            <person name="Virk D."/>
            <person name="Volkov A."/>
            <person name="Wheeler D.A."/>
            <person name="Zhang Z."/>
            <person name="Bailey J.A."/>
            <person name="Eichler E.E."/>
            <person name="Tuzun E."/>
            <person name="Birney E."/>
            <person name="Mongin E."/>
            <person name="Ureta-Vidal A."/>
            <person name="Woodwark C."/>
            <person name="Zdobnov E."/>
            <person name="Bork P."/>
            <person name="Suyama M."/>
            <person name="Torrents D."/>
            <person name="Alexandersson M."/>
            <person name="Trask B.J."/>
            <person name="Young J.M."/>
            <person name="Huang H."/>
            <person name="Wang H."/>
            <person name="Xing H."/>
            <person name="Daniels S."/>
            <person name="Gietzen D."/>
            <person name="Schmidt J."/>
            <person name="Stevens K."/>
            <person name="Vitt U."/>
            <person name="Wingrove J."/>
            <person name="Camara F."/>
            <person name="Mar Alba M."/>
            <person name="Abril J.F."/>
            <person name="Guigo R."/>
            <person name="Smit A."/>
            <person name="Dubchak I."/>
            <person name="Rubin E.M."/>
            <person name="Couronne O."/>
            <person name="Poliakov A."/>
            <person name="Huebner N."/>
            <person name="Ganten D."/>
            <person name="Goesele C."/>
            <person name="Hummel O."/>
            <person name="Kreitler T."/>
            <person name="Lee Y.-A."/>
            <person name="Monti J."/>
            <person name="Schulz H."/>
            <person name="Zimdahl H."/>
            <person name="Himmelbauer H."/>
            <person name="Lehrach H."/>
            <person name="Jacob H.J."/>
            <person name="Bromberg S."/>
            <person name="Gullings-Handley J."/>
            <person name="Jensen-Seaman M.I."/>
            <person name="Kwitek A.E."/>
            <person name="Lazar J."/>
            <person name="Pasko D."/>
            <person name="Tonellato P.J."/>
            <person name="Twigger S."/>
            <person name="Ponting C.P."/>
            <person name="Duarte J.M."/>
            <person name="Rice S."/>
            <person name="Goodstadt L."/>
            <person name="Beatson S.A."/>
            <person name="Emes R.D."/>
            <person name="Winter E.E."/>
            <person name="Webber C."/>
            <person name="Brandt P."/>
            <person name="Nyakatura G."/>
            <person name="Adetobi M."/>
            <person name="Chiaromonte F."/>
            <person name="Elnitski L."/>
            <person name="Eswara P."/>
            <person name="Hardison R.C."/>
            <person name="Hou M."/>
            <person name="Kolbe D."/>
            <person name="Makova K."/>
            <person name="Miller W."/>
            <person name="Nekrutenko A."/>
            <person name="Riemer C."/>
            <person name="Schwartz S."/>
            <person name="Taylor J."/>
            <person name="Yang S."/>
            <person name="Zhang Y."/>
            <person name="Lindpaintner K."/>
            <person name="Andrews T.D."/>
            <person name="Caccamo M."/>
            <person name="Clamp M."/>
            <person name="Clarke L."/>
            <person name="Curwen V."/>
            <person name="Durbin R.M."/>
            <person name="Eyras E."/>
            <person name="Searle S.M."/>
            <person name="Cooper G.M."/>
            <person name="Batzoglou S."/>
            <person name="Brudno M."/>
            <person name="Sidow A."/>
            <person name="Stone E.A."/>
            <person name="Payseur B.A."/>
            <person name="Bourque G."/>
            <person name="Lopez-Otin C."/>
            <person name="Puente X.S."/>
            <person name="Chakrabarti K."/>
            <person name="Chatterji S."/>
            <person name="Dewey C."/>
            <person name="Pachter L."/>
            <person name="Bray N."/>
            <person name="Yap V.B."/>
            <person name="Caspi A."/>
            <person name="Tesler G."/>
            <person name="Pevzner P.A."/>
            <person name="Haussler D."/>
            <person name="Roskin K.M."/>
            <person name="Baertsch R."/>
            <person name="Clawson H."/>
            <person name="Furey T.S."/>
            <person name="Hinrichs A.S."/>
            <person name="Karolchik D."/>
            <person name="Kent W.J."/>
            <person name="Rosenbloom K.R."/>
            <person name="Trumbower H."/>
            <person name="Weirauch M."/>
            <person name="Cooper D.N."/>
            <person name="Stenson P.D."/>
            <person name="Ma B."/>
            <person name="Brent M."/>
            <person name="Arumugam M."/>
            <person name="Shteynberg D."/>
            <person name="Copley R.R."/>
            <person name="Taylor M.S."/>
            <person name="Riethman H."/>
            <person name="Mudunuri U."/>
            <person name="Peterson J."/>
            <person name="Guyer M."/>
            <person name="Felsenfeld A."/>
            <person name="Old S."/>
            <person name="Mockrin S."/>
            <person name="Collins F.S."/>
        </authorList>
    </citation>
    <scope>NUCLEOTIDE SEQUENCE [LARGE SCALE GENOMIC DNA]</scope>
    <source>
        <strain>Brown Norway</strain>
    </source>
</reference>
<reference key="2">
    <citation type="journal article" date="2004" name="Genome Res.">
        <title>The status, quality, and expansion of the NIH full-length cDNA project: the Mammalian Gene Collection (MGC).</title>
        <authorList>
            <consortium name="The MGC Project Team"/>
        </authorList>
    </citation>
    <scope>NUCLEOTIDE SEQUENCE [LARGE SCALE MRNA] (ISOFORM 2)</scope>
    <source>
        <tissue>Testis</tissue>
    </source>
</reference>
<reference key="3">
    <citation type="journal article" date="2012" name="Nat. Commun.">
        <title>Quantitative maps of protein phosphorylation sites across 14 different rat organs and tissues.</title>
        <authorList>
            <person name="Lundby A."/>
            <person name="Secher A."/>
            <person name="Lage K."/>
            <person name="Nordsborg N.B."/>
            <person name="Dmytriyev A."/>
            <person name="Lundby C."/>
            <person name="Olsen J.V."/>
        </authorList>
    </citation>
    <scope>PHOSPHORYLATION [LARGE SCALE ANALYSIS] AT SER-166; SER-171; SER-174; SER-185; SER-549 AND SER-915</scope>
    <scope>IDENTIFICATION BY MASS SPECTROMETRY [LARGE SCALE ANALYSIS]</scope>
</reference>
<feature type="chain" id="PRO_0000317584" description="Rho GTPase-activating protein 29">
    <location>
        <begin position="1"/>
        <end position="1266"/>
    </location>
</feature>
<feature type="domain" description="F-BAR" evidence="7">
    <location>
        <begin position="187"/>
        <end position="457"/>
    </location>
</feature>
<feature type="domain" description="Rho-GAP" evidence="5">
    <location>
        <begin position="668"/>
        <end position="883"/>
    </location>
</feature>
<feature type="zinc finger region" description="Phorbol-ester/DAG-type" evidence="6">
    <location>
        <begin position="609"/>
        <end position="654"/>
    </location>
</feature>
<feature type="region of interest" description="Disordered" evidence="8">
    <location>
        <begin position="538"/>
        <end position="596"/>
    </location>
</feature>
<feature type="region of interest" description="Disordered" evidence="8">
    <location>
        <begin position="1033"/>
        <end position="1054"/>
    </location>
</feature>
<feature type="region of interest" description="Disordered" evidence="8">
    <location>
        <begin position="1114"/>
        <end position="1153"/>
    </location>
</feature>
<feature type="region of interest" description="Disordered" evidence="8">
    <location>
        <begin position="1222"/>
        <end position="1248"/>
    </location>
</feature>
<feature type="region of interest" description="Interaction with PTPN13/PTPL1" evidence="1">
    <location>
        <begin position="1263"/>
        <end position="1266"/>
    </location>
</feature>
<feature type="coiled-coil region" evidence="4">
    <location>
        <begin position="291"/>
        <end position="413"/>
    </location>
</feature>
<feature type="compositionally biased region" description="Low complexity" evidence="8">
    <location>
        <begin position="538"/>
        <end position="556"/>
    </location>
</feature>
<feature type="compositionally biased region" description="Polar residues" evidence="8">
    <location>
        <begin position="1115"/>
        <end position="1127"/>
    </location>
</feature>
<feature type="compositionally biased region" description="Basic and acidic residues" evidence="8">
    <location>
        <begin position="1132"/>
        <end position="1148"/>
    </location>
</feature>
<feature type="site" description="Arginine finger; crucial for GTP hydrolysis by stabilizing the transition state" evidence="5">
    <location>
        <position position="704"/>
    </location>
</feature>
<feature type="modified residue" description="Phosphoserine" evidence="10">
    <location>
        <position position="166"/>
    </location>
</feature>
<feature type="modified residue" description="Phosphoserine" evidence="10">
    <location>
        <position position="171"/>
    </location>
</feature>
<feature type="modified residue" description="Phosphoserine" evidence="10">
    <location>
        <position position="174"/>
    </location>
</feature>
<feature type="modified residue" description="Phosphoserine" evidence="10">
    <location>
        <position position="185"/>
    </location>
</feature>
<feature type="modified residue" description="Phosphoserine" evidence="2">
    <location>
        <position position="496"/>
    </location>
</feature>
<feature type="modified residue" description="Phosphoserine" evidence="3">
    <location>
        <position position="516"/>
    </location>
</feature>
<feature type="modified residue" description="Phosphoserine" evidence="10">
    <location>
        <position position="549"/>
    </location>
</feature>
<feature type="modified residue" description="Phosphoserine" evidence="10">
    <location>
        <position position="915"/>
    </location>
</feature>
<feature type="modified residue" description="Phosphoserine" evidence="2">
    <location>
        <position position="951"/>
    </location>
</feature>
<feature type="modified residue" description="Phosphoserine" evidence="2">
    <location>
        <position position="1023"/>
    </location>
</feature>
<feature type="modified residue" description="Phosphoserine" evidence="3">
    <location>
        <position position="1149"/>
    </location>
</feature>
<feature type="modified residue" description="Phosphoserine" evidence="2">
    <location>
        <position position="1151"/>
    </location>
</feature>
<feature type="splice variant" id="VSP_031061" description="In isoform 2." evidence="9">
    <location>
        <begin position="1"/>
        <end position="84"/>
    </location>
</feature>
<proteinExistence type="evidence at protein level"/>
<protein>
    <recommendedName>
        <fullName>Rho GTPase-activating protein 29</fullName>
    </recommendedName>
    <alternativeName>
        <fullName>Rho-type GTPase-activating protein 29</fullName>
    </alternativeName>
</protein>
<accession>Q5PQJ5</accession>
<organism>
    <name type="scientific">Rattus norvegicus</name>
    <name type="common">Rat</name>
    <dbReference type="NCBI Taxonomy" id="10116"/>
    <lineage>
        <taxon>Eukaryota</taxon>
        <taxon>Metazoa</taxon>
        <taxon>Chordata</taxon>
        <taxon>Craniata</taxon>
        <taxon>Vertebrata</taxon>
        <taxon>Euteleostomi</taxon>
        <taxon>Mammalia</taxon>
        <taxon>Eutheria</taxon>
        <taxon>Euarchontoglires</taxon>
        <taxon>Glires</taxon>
        <taxon>Rodentia</taxon>
        <taxon>Myomorpha</taxon>
        <taxon>Muroidea</taxon>
        <taxon>Muridae</taxon>
        <taxon>Murinae</taxon>
        <taxon>Rattus</taxon>
    </lineage>
</organism>
<keyword id="KW-0025">Alternative splicing</keyword>
<keyword id="KW-0175">Coiled coil</keyword>
<keyword id="KW-0343">GTPase activation</keyword>
<keyword id="KW-0479">Metal-binding</keyword>
<keyword id="KW-0597">Phosphoprotein</keyword>
<keyword id="KW-1185">Reference proteome</keyword>
<keyword id="KW-0862">Zinc</keyword>
<keyword id="KW-0863">Zinc-finger</keyword>
<gene>
    <name type="primary">Arhgap29</name>
</gene>